<evidence type="ECO:0000250" key="1"/>
<evidence type="ECO:0000255" key="2"/>
<evidence type="ECO:0000256" key="3">
    <source>
        <dbReference type="SAM" id="MobiDB-lite"/>
    </source>
</evidence>
<evidence type="ECO:0000269" key="4">
    <source>
    </source>
</evidence>
<evidence type="ECO:0000269" key="5">
    <source>
    </source>
</evidence>
<evidence type="ECO:0000269" key="6">
    <source>
    </source>
</evidence>
<evidence type="ECO:0000269" key="7">
    <source>
    </source>
</evidence>
<evidence type="ECO:0000269" key="8">
    <source>
    </source>
</evidence>
<evidence type="ECO:0000269" key="9">
    <source>
    </source>
</evidence>
<evidence type="ECO:0000305" key="10"/>
<proteinExistence type="evidence at protein level"/>
<organism>
    <name type="scientific">Homo sapiens</name>
    <name type="common">Human</name>
    <dbReference type="NCBI Taxonomy" id="9606"/>
    <lineage>
        <taxon>Eukaryota</taxon>
        <taxon>Metazoa</taxon>
        <taxon>Chordata</taxon>
        <taxon>Craniata</taxon>
        <taxon>Vertebrata</taxon>
        <taxon>Euteleostomi</taxon>
        <taxon>Mammalia</taxon>
        <taxon>Eutheria</taxon>
        <taxon>Euarchontoglires</taxon>
        <taxon>Primates</taxon>
        <taxon>Haplorrhini</taxon>
        <taxon>Catarrhini</taxon>
        <taxon>Hominidae</taxon>
        <taxon>Homo</taxon>
    </lineage>
</organism>
<name>PRB2_HUMAN</name>
<keyword id="KW-0903">Direct protein sequencing</keyword>
<keyword id="KW-0325">Glycoprotein</keyword>
<keyword id="KW-0597">Phosphoprotein</keyword>
<keyword id="KW-1267">Proteomics identification</keyword>
<keyword id="KW-0873">Pyrrolidone carboxylic acid</keyword>
<keyword id="KW-1185">Reference proteome</keyword>
<keyword id="KW-0677">Repeat</keyword>
<keyword id="KW-0964">Secreted</keyword>
<keyword id="KW-0732">Signal</keyword>
<sequence>MLLILLSVALLALSSAQNLNEDVSQEESPSLIAGNPQGAPPQGGNKPQGPPSPPGKPQGPPPQGGNQPQGPPPPPGKPQGPPPQGGNKPQGPPPPGKPQGPPPQGDKSRSPRSPPGKPQGPPPQGGNQPQGPPPPPGKPQGPPPQGGNKPQGPPPPGKPQGPPPQGDNKSRSSRSPPGKPQGPPPQGGNQPQGPPPPPGKPQGPPPQGGNKPQGPPPPGKPQGPPPQGDNKSQSARSPPGKPQGPPPQGGNQPQGPPPPPGKPQGPPPQGGNKPQGPPPPGKPQGPPPQGGSKSRSSRSPPGKPQGPPPQGGNQPQGPPPPPGKPQGPPPQGGNKPQGPPPPGKPQGPPPQGGSKSRSARSPPGKPQGPPQQEGNNPQGPPPPAGGNPQQPQAPPAGQPQGPPRPPQGGRPSRPPQ</sequence>
<gene>
    <name type="primary">PRB2</name>
</gene>
<reference key="1">
    <citation type="journal article" date="2006" name="Nature">
        <title>The finished DNA sequence of human chromosome 12.</title>
        <authorList>
            <person name="Scherer S.E."/>
            <person name="Muzny D.M."/>
            <person name="Buhay C.J."/>
            <person name="Chen R."/>
            <person name="Cree A."/>
            <person name="Ding Y."/>
            <person name="Dugan-Rocha S."/>
            <person name="Gill R."/>
            <person name="Gunaratne P."/>
            <person name="Harris R.A."/>
            <person name="Hawes A.C."/>
            <person name="Hernandez J."/>
            <person name="Hodgson A.V."/>
            <person name="Hume J."/>
            <person name="Jackson A."/>
            <person name="Khan Z.M."/>
            <person name="Kovar-Smith C."/>
            <person name="Lewis L.R."/>
            <person name="Lozado R.J."/>
            <person name="Metzker M.L."/>
            <person name="Milosavljevic A."/>
            <person name="Miner G.R."/>
            <person name="Montgomery K.T."/>
            <person name="Morgan M.B."/>
            <person name="Nazareth L.V."/>
            <person name="Scott G."/>
            <person name="Sodergren E."/>
            <person name="Song X.-Z."/>
            <person name="Steffen D."/>
            <person name="Lovering R.C."/>
            <person name="Wheeler D.A."/>
            <person name="Worley K.C."/>
            <person name="Yuan Y."/>
            <person name="Zhang Z."/>
            <person name="Adams C.Q."/>
            <person name="Ansari-Lari M.A."/>
            <person name="Ayele M."/>
            <person name="Brown M.J."/>
            <person name="Chen G."/>
            <person name="Chen Z."/>
            <person name="Clerc-Blankenburg K.P."/>
            <person name="Davis C."/>
            <person name="Delgado O."/>
            <person name="Dinh H.H."/>
            <person name="Draper H."/>
            <person name="Gonzalez-Garay M.L."/>
            <person name="Havlak P."/>
            <person name="Jackson L.R."/>
            <person name="Jacob L.S."/>
            <person name="Kelly S.H."/>
            <person name="Li L."/>
            <person name="Li Z."/>
            <person name="Liu J."/>
            <person name="Liu W."/>
            <person name="Lu J."/>
            <person name="Maheshwari M."/>
            <person name="Nguyen B.-V."/>
            <person name="Okwuonu G.O."/>
            <person name="Pasternak S."/>
            <person name="Perez L.M."/>
            <person name="Plopper F.J.H."/>
            <person name="Santibanez J."/>
            <person name="Shen H."/>
            <person name="Tabor P.E."/>
            <person name="Verduzco D."/>
            <person name="Waldron L."/>
            <person name="Wang Q."/>
            <person name="Williams G.A."/>
            <person name="Zhang J."/>
            <person name="Zhou J."/>
            <person name="Allen C.C."/>
            <person name="Amin A.G."/>
            <person name="Anyalebechi V."/>
            <person name="Bailey M."/>
            <person name="Barbaria J.A."/>
            <person name="Bimage K.E."/>
            <person name="Bryant N.P."/>
            <person name="Burch P.E."/>
            <person name="Burkett C.E."/>
            <person name="Burrell K.L."/>
            <person name="Calderon E."/>
            <person name="Cardenas V."/>
            <person name="Carter K."/>
            <person name="Casias K."/>
            <person name="Cavazos I."/>
            <person name="Cavazos S.R."/>
            <person name="Ceasar H."/>
            <person name="Chacko J."/>
            <person name="Chan S.N."/>
            <person name="Chavez D."/>
            <person name="Christopoulos C."/>
            <person name="Chu J."/>
            <person name="Cockrell R."/>
            <person name="Cox C.D."/>
            <person name="Dang M."/>
            <person name="Dathorne S.R."/>
            <person name="David R."/>
            <person name="Davis C.M."/>
            <person name="Davy-Carroll L."/>
            <person name="Deshazo D.R."/>
            <person name="Donlin J.E."/>
            <person name="D'Souza L."/>
            <person name="Eaves K.A."/>
            <person name="Egan A."/>
            <person name="Emery-Cohen A.J."/>
            <person name="Escotto M."/>
            <person name="Flagg N."/>
            <person name="Forbes L.D."/>
            <person name="Gabisi A.M."/>
            <person name="Garza M."/>
            <person name="Hamilton C."/>
            <person name="Henderson N."/>
            <person name="Hernandez O."/>
            <person name="Hines S."/>
            <person name="Hogues M.E."/>
            <person name="Huang M."/>
            <person name="Idlebird D.G."/>
            <person name="Johnson R."/>
            <person name="Jolivet A."/>
            <person name="Jones S."/>
            <person name="Kagan R."/>
            <person name="King L.M."/>
            <person name="Leal B."/>
            <person name="Lebow H."/>
            <person name="Lee S."/>
            <person name="LeVan J.M."/>
            <person name="Lewis L.C."/>
            <person name="London P."/>
            <person name="Lorensuhewa L.M."/>
            <person name="Loulseged H."/>
            <person name="Lovett D.A."/>
            <person name="Lucier A."/>
            <person name="Lucier R.L."/>
            <person name="Ma J."/>
            <person name="Madu R.C."/>
            <person name="Mapua P."/>
            <person name="Martindale A.D."/>
            <person name="Martinez E."/>
            <person name="Massey E."/>
            <person name="Mawhiney S."/>
            <person name="Meador M.G."/>
            <person name="Mendez S."/>
            <person name="Mercado C."/>
            <person name="Mercado I.C."/>
            <person name="Merritt C.E."/>
            <person name="Miner Z.L."/>
            <person name="Minja E."/>
            <person name="Mitchell T."/>
            <person name="Mohabbat F."/>
            <person name="Mohabbat K."/>
            <person name="Montgomery B."/>
            <person name="Moore N."/>
            <person name="Morris S."/>
            <person name="Munidasa M."/>
            <person name="Ngo R.N."/>
            <person name="Nguyen N.B."/>
            <person name="Nickerson E."/>
            <person name="Nwaokelemeh O.O."/>
            <person name="Nwokenkwo S."/>
            <person name="Obregon M."/>
            <person name="Oguh M."/>
            <person name="Oragunye N."/>
            <person name="Oviedo R.J."/>
            <person name="Parish B.J."/>
            <person name="Parker D.N."/>
            <person name="Parrish J."/>
            <person name="Parks K.L."/>
            <person name="Paul H.A."/>
            <person name="Payton B.A."/>
            <person name="Perez A."/>
            <person name="Perrin W."/>
            <person name="Pickens A."/>
            <person name="Primus E.L."/>
            <person name="Pu L.-L."/>
            <person name="Puazo M."/>
            <person name="Quiles M.M."/>
            <person name="Quiroz J.B."/>
            <person name="Rabata D."/>
            <person name="Reeves K."/>
            <person name="Ruiz S.J."/>
            <person name="Shao H."/>
            <person name="Sisson I."/>
            <person name="Sonaike T."/>
            <person name="Sorelle R.P."/>
            <person name="Sutton A.E."/>
            <person name="Svatek A.F."/>
            <person name="Svetz L.A."/>
            <person name="Tamerisa K.S."/>
            <person name="Taylor T.R."/>
            <person name="Teague B."/>
            <person name="Thomas N."/>
            <person name="Thorn R.D."/>
            <person name="Trejos Z.Y."/>
            <person name="Trevino B.K."/>
            <person name="Ukegbu O.N."/>
            <person name="Urban J.B."/>
            <person name="Vasquez L.I."/>
            <person name="Vera V.A."/>
            <person name="Villasana D.M."/>
            <person name="Wang L."/>
            <person name="Ward-Moore S."/>
            <person name="Warren J.T."/>
            <person name="Wei X."/>
            <person name="White F."/>
            <person name="Williamson A.L."/>
            <person name="Wleczyk R."/>
            <person name="Wooden H.S."/>
            <person name="Wooden S.H."/>
            <person name="Yen J."/>
            <person name="Yoon L."/>
            <person name="Yoon V."/>
            <person name="Zorrilla S.E."/>
            <person name="Nelson D."/>
            <person name="Kucherlapati R."/>
            <person name="Weinstock G."/>
            <person name="Gibbs R.A."/>
        </authorList>
    </citation>
    <scope>NUCLEOTIDE SEQUENCE [LARGE SCALE GENOMIC DNA]</scope>
</reference>
<reference key="2">
    <citation type="journal article" date="2007" name="BMC Genomics">
        <title>The full-ORF clone resource of the German cDNA consortium.</title>
        <authorList>
            <person name="Bechtel S."/>
            <person name="Rosenfelder H."/>
            <person name="Duda A."/>
            <person name="Schmidt C.P."/>
            <person name="Ernst U."/>
            <person name="Wellenreuther R."/>
            <person name="Mehrle A."/>
            <person name="Schuster C."/>
            <person name="Bahr A."/>
            <person name="Bloecker H."/>
            <person name="Heubner D."/>
            <person name="Hoerlein A."/>
            <person name="Michel G."/>
            <person name="Wedler H."/>
            <person name="Koehrer K."/>
            <person name="Ottenwaelder B."/>
            <person name="Poustka A."/>
            <person name="Wiemann S."/>
            <person name="Schupp I."/>
        </authorList>
    </citation>
    <scope>NUCLEOTIDE SEQUENCE [LARGE SCALE MRNA] OF 1-156</scope>
</reference>
<reference key="3">
    <citation type="journal article" date="1986" name="Biochemistry">
        <title>Basic proline-rich proteins from human parotid saliva: complete covalent structures of proteins IB-1 and IB-6.</title>
        <authorList>
            <person name="Kauffman D."/>
            <person name="Hofmann T."/>
            <person name="Bennick A."/>
            <person name="Keller P."/>
        </authorList>
    </citation>
    <scope>PROTEIN SEQUENCE OF 17-112</scope>
    <scope>PYROGLUTAMATE FORMATION AT GLN-17</scope>
    <scope>PHOSPHORYLATION AT SER-24</scope>
    <source>
        <tissue>Saliva</tissue>
    </source>
</reference>
<reference key="4">
    <citation type="journal article" date="1982" name="Biochemistry">
        <title>Basic proline-rich proteins from human parotid saliva: complete covalent structure of protein IB-9 and partial structure of protein IB-6, members of a polymorphic pair.</title>
        <authorList>
            <person name="Kauffman D."/>
            <person name="Wong R."/>
            <person name="Bennick A."/>
            <person name="Keller P."/>
        </authorList>
    </citation>
    <scope>PROTEIN SEQUENCE OF 52-112</scope>
    <source>
        <tissue>Saliva</tissue>
    </source>
</reference>
<reference key="5">
    <citation type="journal article" date="1982" name="J. Biochem.">
        <title>Fractionation and characterization of basic proline-rich peptides of human parotid saliva and the amino acid sequence of proline-rich peptide P-E.</title>
        <authorList>
            <person name="Isemura S."/>
            <person name="Saitoh E."/>
            <person name="Sanada K."/>
        </authorList>
    </citation>
    <scope>PROTEIN SEQUENCE OF 52-112</scope>
    <source>
        <tissue>Saliva</tissue>
    </source>
</reference>
<reference key="6">
    <citation type="journal article" date="1996" name="Am. J. Hum. Genet.">
        <title>PRB1, PRB2, and PRB4 coded polymorphisms among human salivary concanavalin-A binding, II-1, and Po proline-rich proteins.</title>
        <authorList>
            <person name="Azen E.A."/>
            <person name="Amberger E."/>
            <person name="Fisher S."/>
            <person name="Prakobphol A."/>
            <person name="Niece R.L."/>
        </authorList>
    </citation>
    <scope>NUCLEOTIDE SEQUENCE [GENOMIC DNA] OF 35-416</scope>
    <scope>PROTEIN SEQUENCE OF 175-235</scope>
    <scope>GLYCOSYLATION</scope>
    <scope>VARIANT SER-274</scope>
</reference>
<reference key="7">
    <citation type="journal article" date="1991" name="Biochemistry">
        <title>Basic proline-rich proteins from human parotid saliva: relationships of the covalent structures of ten proteins from a single individual.</title>
        <authorList>
            <person name="Kauffman D.L."/>
            <person name="Bennick A."/>
            <person name="Blum M."/>
            <person name="Keller P.J."/>
        </authorList>
    </citation>
    <scope>PROTEIN SEQUENCE OF 113-171; 299-359 AND 361-416</scope>
    <source>
        <tissue>Saliva</tissue>
    </source>
</reference>
<reference key="8">
    <citation type="journal article" date="1985" name="J. Biol. Chem.">
        <title>Differential RNA splicing and post-translational cleavages in the human salivary proline-rich protein gene system.</title>
        <authorList>
            <person name="Maeda N."/>
            <person name="Kim H.-S."/>
            <person name="Azen E.A."/>
            <person name="Smithies O."/>
        </authorList>
    </citation>
    <scope>NUCLEOTIDE SEQUENCE [MRNA] OF 166-416</scope>
    <scope>VARIANT SER-274</scope>
</reference>
<reference key="9">
    <citation type="journal article" date="1983" name="J. Biochem.">
        <title>Complete amino acid sequence of a basic proline-rich peptide, P-F, from human parotid saliva.</title>
        <authorList>
            <person name="Saitoh E."/>
            <person name="Isemura S."/>
            <person name="Sanada K."/>
        </authorList>
    </citation>
    <scope>PROTEIN SEQUENCE OF 299-359</scope>
    <source>
        <tissue>Saliva</tissue>
    </source>
</reference>
<reference key="10">
    <citation type="journal article" date="1988" name="Genetics">
        <title>Length polymorphisms in human proline-rich protein genes generated by intragenic unequal crossing over.</title>
        <authorList>
            <person name="Lyons K.M."/>
            <person name="Stein J.H."/>
            <person name="Smithies O."/>
        </authorList>
    </citation>
    <scope>POLYMORPHISM</scope>
</reference>
<reference key="11">
    <citation type="journal article" date="2008" name="J. Biol. Chem.">
        <title>Identification of Lys-Pro-Gln as a novel cleavage site specificity of saliva-associated proteases.</title>
        <authorList>
            <person name="Helmerhorst E.J."/>
            <person name="Sun X."/>
            <person name="Salih E."/>
            <person name="Oppenheim F.G."/>
        </authorList>
    </citation>
    <scope>PROTEOLYTIC PROCESSING</scope>
    <scope>IDENTIFICATION BY MASS SPECTROMETRY</scope>
</reference>
<reference key="12">
    <citation type="journal article" date="2010" name="Proteomics">
        <title>Finding new posttranslational modifications in salivary proline-rich proteins.</title>
        <authorList>
            <person name="Vitorino R."/>
            <person name="Alves R."/>
            <person name="Barros A."/>
            <person name="Caseiro A."/>
            <person name="Ferreira R."/>
            <person name="Lobo M.C."/>
            <person name="Bastos A."/>
            <person name="Duarte J."/>
            <person name="Carvalho D."/>
            <person name="Santos L.L."/>
            <person name="Amado F.L."/>
        </authorList>
    </citation>
    <scope>GLYCOSYLATION AT ASN-230; SER-232 AND ASN-272</scope>
    <scope>PHOSPHORYLATION AT SER-52</scope>
    <scope>PYROGLUTAMATE FORMATION AT GLN-17</scope>
    <scope>IDENTIFICATION BY MASS SPECTROMETRY</scope>
</reference>
<protein>
    <recommendedName>
        <fullName>Basic salivary proline-rich protein 2</fullName>
        <shortName>Salivary proline-rich protein</shortName>
    </recommendedName>
    <alternativeName>
        <fullName>Con1 glycoprotein</fullName>
    </alternativeName>
    <component>
        <recommendedName>
            <fullName>Basic proline-rich peptide IB-1</fullName>
        </recommendedName>
    </component>
    <component>
        <recommendedName>
            <fullName>Basic proline-rich peptide P-E</fullName>
        </recommendedName>
        <alternativeName>
            <fullName>IB-9</fullName>
        </alternativeName>
    </component>
    <component>
        <recommendedName>
            <fullName>Basic proline-rich peptide IB-7</fullName>
        </recommendedName>
    </component>
    <component>
        <recommendedName>
            <fullName>Basic proline-rich peptide IB-8c</fullName>
        </recommendedName>
        <alternativeName>
            <fullName>Basic peptide P-F</fullName>
        </alternativeName>
    </component>
    <component>
        <recommendedName>
            <fullName>Basic proline-rich peptide IB-4</fullName>
        </recommendedName>
    </component>
</protein>
<dbReference type="EMBL" id="AC078950">
    <property type="status" value="NOT_ANNOTATED_CDS"/>
    <property type="molecule type" value="Genomic_DNA"/>
</dbReference>
<dbReference type="EMBL" id="BX484538">
    <property type="status" value="NOT_ANNOTATED_CDS"/>
    <property type="molecule type" value="mRNA"/>
</dbReference>
<dbReference type="EMBL" id="S80905">
    <property type="protein sequence ID" value="AAB50686.1"/>
    <property type="molecule type" value="Genomic_DNA"/>
</dbReference>
<dbReference type="EMBL" id="K03208">
    <property type="protein sequence ID" value="AAA60189.1"/>
    <property type="molecule type" value="mRNA"/>
</dbReference>
<dbReference type="CCDS" id="CCDS41757.2"/>
<dbReference type="PIR" id="B40750">
    <property type="entry name" value="PIHUB6"/>
</dbReference>
<dbReference type="PIR" id="E25372">
    <property type="entry name" value="PIHUPF"/>
</dbReference>
<dbReference type="RefSeq" id="NP_006239.3">
    <property type="nucleotide sequence ID" value="NM_006248.4"/>
</dbReference>
<dbReference type="FunCoup" id="P02812">
    <property type="interactions" value="21"/>
</dbReference>
<dbReference type="IntAct" id="P02812">
    <property type="interactions" value="4"/>
</dbReference>
<dbReference type="STRING" id="9606.ENSP00000374013"/>
<dbReference type="GlyCosmos" id="P02812">
    <property type="glycosylation" value="4 sites, No reported glycans"/>
</dbReference>
<dbReference type="GlyGen" id="P02812">
    <property type="glycosylation" value="4 sites"/>
</dbReference>
<dbReference type="iPTMnet" id="P02812"/>
<dbReference type="PhosphoSitePlus" id="P02812"/>
<dbReference type="BioMuta" id="PRB2"/>
<dbReference type="DMDM" id="160409933"/>
<dbReference type="jPOST" id="P02812"/>
<dbReference type="MassIVE" id="P02812"/>
<dbReference type="PaxDb" id="9606-ENSP00000374013"/>
<dbReference type="PeptideAtlas" id="P02812"/>
<dbReference type="ProteomicsDB" id="51604"/>
<dbReference type="TopDownProteomics" id="P02812"/>
<dbReference type="Antibodypedia" id="54442">
    <property type="antibodies" value="15 antibodies from 4 providers"/>
</dbReference>
<dbReference type="Ensembl" id="ENST00000389362.6">
    <property type="protein sequence ID" value="ENSP00000374013.4"/>
    <property type="gene ID" value="ENSG00000121335.12"/>
</dbReference>
<dbReference type="GeneID" id="653247"/>
<dbReference type="KEGG" id="hsa:653247"/>
<dbReference type="MANE-Select" id="ENST00000389362.6">
    <property type="protein sequence ID" value="ENSP00000374013.4"/>
    <property type="RefSeq nucleotide sequence ID" value="NM_006248.4"/>
    <property type="RefSeq protein sequence ID" value="NP_006239.3"/>
</dbReference>
<dbReference type="UCSC" id="uc010shk.2">
    <property type="organism name" value="human"/>
</dbReference>
<dbReference type="AGR" id="HGNC:9338"/>
<dbReference type="CTD" id="653247"/>
<dbReference type="DisGeNET" id="653247"/>
<dbReference type="GeneCards" id="PRB2"/>
<dbReference type="HGNC" id="HGNC:9338">
    <property type="gene designation" value="PRB2"/>
</dbReference>
<dbReference type="HPA" id="ENSG00000121335">
    <property type="expression patterns" value="Tissue enriched (salivary)"/>
</dbReference>
<dbReference type="MIM" id="168810">
    <property type="type" value="gene"/>
</dbReference>
<dbReference type="neXtProt" id="NX_P02812"/>
<dbReference type="OpenTargets" id="ENSG00000121335"/>
<dbReference type="VEuPathDB" id="HostDB:ENSG00000121335"/>
<dbReference type="eggNOG" id="ENOG502SEXN">
    <property type="taxonomic scope" value="Eukaryota"/>
</dbReference>
<dbReference type="GeneTree" id="ENSGT00730000111783"/>
<dbReference type="HOGENOM" id="CLU_054768_0_0_1"/>
<dbReference type="InParanoid" id="P02812"/>
<dbReference type="OMA" id="YFLAMMQ"/>
<dbReference type="PAN-GO" id="P02812">
    <property type="GO annotations" value="0 GO annotations based on evolutionary models"/>
</dbReference>
<dbReference type="PathwayCommons" id="P02812"/>
<dbReference type="SignaLink" id="P02812"/>
<dbReference type="ChiTaRS" id="PRB2">
    <property type="organism name" value="human"/>
</dbReference>
<dbReference type="Pharos" id="P02812">
    <property type="development level" value="Tdark"/>
</dbReference>
<dbReference type="PRO" id="PR:P02812"/>
<dbReference type="Proteomes" id="UP000005640">
    <property type="component" value="Chromosome 12"/>
</dbReference>
<dbReference type="RNAct" id="P02812">
    <property type="molecule type" value="protein"/>
</dbReference>
<dbReference type="Bgee" id="ENSG00000121335">
    <property type="expression patterns" value="Expressed in caudate nucleus and 87 other cell types or tissues"/>
</dbReference>
<dbReference type="ExpressionAtlas" id="P02812">
    <property type="expression patterns" value="baseline and differential"/>
</dbReference>
<dbReference type="GO" id="GO:0005576">
    <property type="term" value="C:extracellular region"/>
    <property type="evidence" value="ECO:0007669"/>
    <property type="project" value="UniProtKB-SubCell"/>
</dbReference>
<dbReference type="InterPro" id="IPR026086">
    <property type="entry name" value="Pro-rich"/>
</dbReference>
<dbReference type="PANTHER" id="PTHR23203:SF20">
    <property type="entry name" value="BASIC SALIVARY PROLINE-RICH PROTEIN 1-RELATED"/>
    <property type="match status" value="1"/>
</dbReference>
<dbReference type="PANTHER" id="PTHR23203">
    <property type="entry name" value="PROLINE-RICH PROTEIN"/>
    <property type="match status" value="1"/>
</dbReference>
<dbReference type="Pfam" id="PF15240">
    <property type="entry name" value="Pro-rich"/>
    <property type="match status" value="2"/>
</dbReference>
<dbReference type="SMART" id="SM01412">
    <property type="entry name" value="Pro-rich"/>
    <property type="match status" value="2"/>
</dbReference>
<accession>P02812</accession>
<accession>O00599</accession>
<accession>P02811</accession>
<accession>P04281</accession>
<comment type="interaction">
    <interactant intactId="EBI-19951389">
        <id>P02812</id>
    </interactant>
    <interactant intactId="EBI-12092171">
        <id>Q12797-6</id>
        <label>ASPH</label>
    </interactant>
    <organismsDiffer>false</organismsDiffer>
    <experiments>3</experiments>
</comment>
<comment type="interaction">
    <interactant intactId="EBI-19951389">
        <id>P02812</id>
    </interactant>
    <interactant intactId="EBI-11988931">
        <id>Q96C03-3</id>
        <label>MIEF2</label>
    </interactant>
    <organismsDiffer>false</organismsDiffer>
    <experiments>3</experiments>
</comment>
<comment type="subcellular location">
    <subcellularLocation>
        <location evidence="1">Secreted</location>
    </subcellularLocation>
</comment>
<comment type="PTM">
    <text evidence="5 9">N- and O-glycosylated. In head and neck cancer patients, O-glycosylated with glucosylgalactosyl carbohydrate moiety. This modification would require prior hydroxylation on the lysine residue.</text>
</comment>
<comment type="PTM">
    <text evidence="4">Proteolytically cleaved at the tripeptide Xaa-Pro-Gln, where Xaa in the P(3) position is mostly lysine. The endoprotease may be of microbial origin.</text>
</comment>
<comment type="PTM">
    <text evidence="4">Pyroglutamate formation occurs on terminal Gln residues of cleaved peptides. Pyroglutamate formation found on at least Gln-398 and Gln-400.</text>
</comment>
<comment type="polymorphism">
    <text evidence="6">The number of repeats is polymorphic and varies among different alleles (PubMed:2851479).</text>
</comment>
<comment type="miscellaneous">
    <text>Peptides IB-9 and P-E are the same peptide.</text>
</comment>
<feature type="signal peptide" evidence="2">
    <location>
        <begin position="1"/>
        <end position="16"/>
    </location>
</feature>
<feature type="chain" id="PRO_0000022095" description="Basic salivary proline-rich protein 2">
    <location>
        <begin position="17"/>
        <end position="416"/>
    </location>
</feature>
<feature type="chain" id="PRO_0000097038" description="Basic proline-rich peptide IB-1">
    <location>
        <begin position="17"/>
        <end position="112"/>
    </location>
</feature>
<feature type="chain" id="PRO_0000395485" description="Basic proline-rich peptide P-E">
    <location>
        <begin position="52"/>
        <end position="112"/>
    </location>
</feature>
<feature type="chain" id="PRO_0000372439" description="Basic proline-rich peptide IB-7">
    <location>
        <begin position="113"/>
        <end position="171"/>
    </location>
</feature>
<feature type="chain" id="PRO_0000022096" description="Basic proline-rich peptide IB-8c">
    <location>
        <begin position="299"/>
        <end position="359"/>
    </location>
</feature>
<feature type="chain" id="PRO_0000372440" description="Basic proline-rich peptide IB-4">
    <location>
        <begin position="361"/>
        <end position="416"/>
    </location>
</feature>
<feature type="repeat" description="1">
    <location>
        <begin position="53"/>
        <end position="72"/>
    </location>
</feature>
<feature type="repeat" description="2">
    <location>
        <begin position="74"/>
        <end position="93"/>
    </location>
</feature>
<feature type="repeat" description="3">
    <location>
        <begin position="94"/>
        <end position="113"/>
    </location>
</feature>
<feature type="repeat" description="4">
    <location>
        <begin position="114"/>
        <end position="133"/>
    </location>
</feature>
<feature type="repeat" description="5">
    <location>
        <begin position="135"/>
        <end position="154"/>
    </location>
</feature>
<feature type="repeat" description="6">
    <location>
        <begin position="155"/>
        <end position="174"/>
    </location>
</feature>
<feature type="repeat" description="7">
    <location>
        <begin position="176"/>
        <end position="195"/>
    </location>
</feature>
<feature type="repeat" description="8">
    <location>
        <begin position="197"/>
        <end position="216"/>
    </location>
</feature>
<feature type="repeat" description="9">
    <location>
        <begin position="217"/>
        <end position="236"/>
    </location>
</feature>
<feature type="repeat" description="10">
    <location>
        <begin position="238"/>
        <end position="257"/>
    </location>
</feature>
<feature type="repeat" description="11">
    <location>
        <begin position="259"/>
        <end position="278"/>
    </location>
</feature>
<feature type="repeat" description="12">
    <location>
        <begin position="279"/>
        <end position="298"/>
    </location>
</feature>
<feature type="repeat" description="13">
    <location>
        <begin position="300"/>
        <end position="319"/>
    </location>
</feature>
<feature type="repeat" description="14">
    <location>
        <begin position="321"/>
        <end position="340"/>
    </location>
</feature>
<feature type="repeat" description="15">
    <location>
        <begin position="341"/>
        <end position="360"/>
    </location>
</feature>
<feature type="region of interest" description="Disordered" evidence="3">
    <location>
        <begin position="19"/>
        <end position="416"/>
    </location>
</feature>
<feature type="region of interest" description="15 X 20 AA approximate tandem repeats of P-P-G-K-P-Q-G-P-P-P-Q-G-[GD]-[NKS]-[KSQ]-[PRS]-[QRS] [GPS]-[PSAR]-[PSR]">
    <location>
        <begin position="53"/>
        <end position="360"/>
    </location>
</feature>
<feature type="compositionally biased region" description="Polar residues" evidence="3">
    <location>
        <begin position="19"/>
        <end position="28"/>
    </location>
</feature>
<feature type="compositionally biased region" description="Low complexity" evidence="3">
    <location>
        <begin position="34"/>
        <end position="47"/>
    </location>
</feature>
<feature type="compositionally biased region" description="Pro residues" evidence="3">
    <location>
        <begin position="48"/>
        <end position="104"/>
    </location>
</feature>
<feature type="compositionally biased region" description="Pro residues" evidence="3">
    <location>
        <begin position="112"/>
        <end position="165"/>
    </location>
</feature>
<feature type="compositionally biased region" description="Pro residues" evidence="3">
    <location>
        <begin position="177"/>
        <end position="227"/>
    </location>
</feature>
<feature type="compositionally biased region" description="Pro residues" evidence="3">
    <location>
        <begin position="239"/>
        <end position="289"/>
    </location>
</feature>
<feature type="compositionally biased region" description="Low complexity" evidence="3">
    <location>
        <begin position="290"/>
        <end position="300"/>
    </location>
</feature>
<feature type="compositionally biased region" description="Pro residues" evidence="3">
    <location>
        <begin position="301"/>
        <end position="351"/>
    </location>
</feature>
<feature type="compositionally biased region" description="Pro residues" evidence="3">
    <location>
        <begin position="378"/>
        <end position="416"/>
    </location>
</feature>
<feature type="modified residue" description="Pyrrolidone carboxylic acid" evidence="5 8">
    <location>
        <position position="17"/>
    </location>
</feature>
<feature type="modified residue" description="Phosphoserine" evidence="8">
    <location>
        <position position="24"/>
    </location>
</feature>
<feature type="modified residue" description="Phosphoserine" evidence="5">
    <location>
        <position position="52"/>
    </location>
</feature>
<feature type="glycosylation site" description="N-linked (GlcNAc...) asparagine" evidence="2">
    <location>
        <position position="168"/>
    </location>
</feature>
<feature type="glycosylation site" description="N-linked (GlcNAc...) asparagine" evidence="5">
    <location>
        <position position="230"/>
    </location>
</feature>
<feature type="glycosylation site" description="O-linked (Hex) serine" evidence="5">
    <location>
        <position position="232"/>
    </location>
</feature>
<feature type="glycosylation site" description="N-linked (GlcNAc...) asparagine" evidence="5">
    <location>
        <position position="272"/>
    </location>
</feature>
<feature type="sequence variant" id="VAR_061693" description="In dbSNP:rs34305575.">
    <original>Q</original>
    <variation>R</variation>
    <location>
        <position position="233"/>
    </location>
</feature>
<feature type="sequence variant" id="VAR_019695" description="In dbSNP:rs10845349." evidence="7 9">
    <original>P</original>
    <variation>S</variation>
    <location>
        <position position="274"/>
    </location>
</feature>
<feature type="sequence conflict" description="In Ref. 2; BX484538." evidence="10" ref="2">
    <original>P</original>
    <variation>S</variation>
    <location>
        <position position="68"/>
    </location>
</feature>
<feature type="sequence conflict" description="In Ref. 4; AA sequence and 5; AA sequence." evidence="10" ref="4 5">
    <original>K</original>
    <variation>R</variation>
    <location>
        <position position="88"/>
    </location>
</feature>
<feature type="sequence conflict" description="In Ref. 2; BX484538." evidence="10" ref="2">
    <original>Q</original>
    <variation>P</variation>
    <location>
        <position position="151"/>
    </location>
</feature>
<feature type="sequence conflict" description="In Ref. 8; AAA60189." evidence="10" ref="8">
    <original>G</original>
    <variation>D</variation>
    <location>
        <position position="271"/>
    </location>
</feature>